<gene>
    <name type="primary">PYR4</name>
    <name type="ordered locus">At4g22930</name>
    <name type="ORF">F7H19.110</name>
</gene>
<keyword id="KW-0378">Hydrolase</keyword>
<keyword id="KW-0479">Metal-binding</keyword>
<keyword id="KW-0496">Mitochondrion</keyword>
<keyword id="KW-0597">Phosphoprotein</keyword>
<keyword id="KW-0665">Pyrimidine biosynthesis</keyword>
<keyword id="KW-1185">Reference proteome</keyword>
<keyword id="KW-0809">Transit peptide</keyword>
<keyword id="KW-0862">Zinc</keyword>
<comment type="catalytic activity">
    <reaction>
        <text>(S)-dihydroorotate + H2O = N-carbamoyl-L-aspartate + H(+)</text>
        <dbReference type="Rhea" id="RHEA:24296"/>
        <dbReference type="ChEBI" id="CHEBI:15377"/>
        <dbReference type="ChEBI" id="CHEBI:15378"/>
        <dbReference type="ChEBI" id="CHEBI:30864"/>
        <dbReference type="ChEBI" id="CHEBI:32814"/>
        <dbReference type="EC" id="3.5.2.3"/>
    </reaction>
</comment>
<comment type="cofactor">
    <cofactor evidence="1">
        <name>Zn(2+)</name>
        <dbReference type="ChEBI" id="CHEBI:29105"/>
    </cofactor>
    <text evidence="1">Binds 2 Zn(2+) ions per subunit.</text>
</comment>
<comment type="pathway">
    <text>Pyrimidine metabolism; UMP biosynthesis via de novo pathway; (S)-dihydroorotate from bicarbonate: step 3/3.</text>
</comment>
<comment type="subcellular location">
    <subcellularLocation>
        <location evidence="3">Mitochondrion</location>
    </subcellularLocation>
</comment>
<comment type="similarity">
    <text evidence="3">Belongs to the metallo-dependent hydrolases superfamily. DHOase family. Class II DHOase subfamily.</text>
</comment>
<proteinExistence type="evidence at protein level"/>
<dbReference type="EC" id="3.5.2.3"/>
<dbReference type="EMBL" id="AF000146">
    <property type="protein sequence ID" value="AAB71134.1"/>
    <property type="molecule type" value="mRNA"/>
</dbReference>
<dbReference type="EMBL" id="AL031018">
    <property type="protein sequence ID" value="CAA19808.1"/>
    <property type="molecule type" value="Genomic_DNA"/>
</dbReference>
<dbReference type="EMBL" id="AL161558">
    <property type="protein sequence ID" value="CAB79248.1"/>
    <property type="molecule type" value="Genomic_DNA"/>
</dbReference>
<dbReference type="EMBL" id="CP002687">
    <property type="protein sequence ID" value="AEE84682.1"/>
    <property type="molecule type" value="Genomic_DNA"/>
</dbReference>
<dbReference type="EMBL" id="CP002687">
    <property type="protein sequence ID" value="ANM66059.1"/>
    <property type="molecule type" value="Genomic_DNA"/>
</dbReference>
<dbReference type="EMBL" id="AK228295">
    <property type="protein sequence ID" value="BAF00239.1"/>
    <property type="molecule type" value="mRNA"/>
</dbReference>
<dbReference type="PIR" id="T05124">
    <property type="entry name" value="T05124"/>
</dbReference>
<dbReference type="RefSeq" id="NP_001327985.1">
    <property type="nucleotide sequence ID" value="NM_001341566.1"/>
</dbReference>
<dbReference type="RefSeq" id="NP_194024.1">
    <property type="nucleotide sequence ID" value="NM_118422.4"/>
</dbReference>
<dbReference type="SMR" id="O04904"/>
<dbReference type="BioGRID" id="13681">
    <property type="interactions" value="1"/>
</dbReference>
<dbReference type="FunCoup" id="O04904">
    <property type="interactions" value="1281"/>
</dbReference>
<dbReference type="STRING" id="3702.O04904"/>
<dbReference type="iPTMnet" id="O04904"/>
<dbReference type="PaxDb" id="3702-AT4G22930.1"/>
<dbReference type="ProteomicsDB" id="224813"/>
<dbReference type="EnsemblPlants" id="AT4G22930.1">
    <property type="protein sequence ID" value="AT4G22930.1"/>
    <property type="gene ID" value="AT4G22930"/>
</dbReference>
<dbReference type="EnsemblPlants" id="AT4G22930.2">
    <property type="protein sequence ID" value="AT4G22930.2"/>
    <property type="gene ID" value="AT4G22930"/>
</dbReference>
<dbReference type="GeneID" id="828392"/>
<dbReference type="Gramene" id="AT4G22930.1">
    <property type="protein sequence ID" value="AT4G22930.1"/>
    <property type="gene ID" value="AT4G22930"/>
</dbReference>
<dbReference type="Gramene" id="AT4G22930.2">
    <property type="protein sequence ID" value="AT4G22930.2"/>
    <property type="gene ID" value="AT4G22930"/>
</dbReference>
<dbReference type="KEGG" id="ath:AT4G22930"/>
<dbReference type="Araport" id="AT4G22930"/>
<dbReference type="TAIR" id="AT4G22930">
    <property type="gene designation" value="PYR4"/>
</dbReference>
<dbReference type="eggNOG" id="KOG2902">
    <property type="taxonomic scope" value="Eukaryota"/>
</dbReference>
<dbReference type="HOGENOM" id="CLU_041558_1_0_1"/>
<dbReference type="InParanoid" id="O04904"/>
<dbReference type="OMA" id="TLHHISM"/>
<dbReference type="OrthoDB" id="1670005at2759"/>
<dbReference type="PhylomeDB" id="O04904"/>
<dbReference type="BioCyc" id="ARA:AT4G22930-MONOMER"/>
<dbReference type="BRENDA" id="3.5.2.3">
    <property type="organism ID" value="399"/>
</dbReference>
<dbReference type="UniPathway" id="UPA00070">
    <property type="reaction ID" value="UER00117"/>
</dbReference>
<dbReference type="PRO" id="PR:O04904"/>
<dbReference type="Proteomes" id="UP000006548">
    <property type="component" value="Chromosome 4"/>
</dbReference>
<dbReference type="ExpressionAtlas" id="O04904">
    <property type="expression patterns" value="baseline and differential"/>
</dbReference>
<dbReference type="GO" id="GO:0009507">
    <property type="term" value="C:chloroplast"/>
    <property type="evidence" value="ECO:0007005"/>
    <property type="project" value="TAIR"/>
</dbReference>
<dbReference type="GO" id="GO:0005829">
    <property type="term" value="C:cytosol"/>
    <property type="evidence" value="ECO:0007005"/>
    <property type="project" value="TAIR"/>
</dbReference>
<dbReference type="GO" id="GO:0005739">
    <property type="term" value="C:mitochondrion"/>
    <property type="evidence" value="ECO:0007669"/>
    <property type="project" value="UniProtKB-SubCell"/>
</dbReference>
<dbReference type="GO" id="GO:0004151">
    <property type="term" value="F:dihydroorotase activity"/>
    <property type="evidence" value="ECO:0007669"/>
    <property type="project" value="UniProtKB-EC"/>
</dbReference>
<dbReference type="GO" id="GO:0046872">
    <property type="term" value="F:metal ion binding"/>
    <property type="evidence" value="ECO:0007669"/>
    <property type="project" value="UniProtKB-KW"/>
</dbReference>
<dbReference type="GO" id="GO:0044205">
    <property type="term" value="P:'de novo' UMP biosynthetic process"/>
    <property type="evidence" value="ECO:0007669"/>
    <property type="project" value="UniProtKB-UniPathway"/>
</dbReference>
<dbReference type="GO" id="GO:0019856">
    <property type="term" value="P:pyrimidine nucleobase biosynthetic process"/>
    <property type="evidence" value="ECO:0007669"/>
    <property type="project" value="InterPro"/>
</dbReference>
<dbReference type="CDD" id="cd01294">
    <property type="entry name" value="DHOase"/>
    <property type="match status" value="1"/>
</dbReference>
<dbReference type="FunFam" id="3.20.20.140:FF:000006">
    <property type="entry name" value="Dihydroorotase"/>
    <property type="match status" value="1"/>
</dbReference>
<dbReference type="Gene3D" id="3.20.20.140">
    <property type="entry name" value="Metal-dependent hydrolases"/>
    <property type="match status" value="1"/>
</dbReference>
<dbReference type="HAMAP" id="MF_00219">
    <property type="entry name" value="PyrC_classII"/>
    <property type="match status" value="1"/>
</dbReference>
<dbReference type="InterPro" id="IPR006680">
    <property type="entry name" value="Amidohydro-rel"/>
</dbReference>
<dbReference type="InterPro" id="IPR004721">
    <property type="entry name" value="DHOdimr"/>
</dbReference>
<dbReference type="InterPro" id="IPR002195">
    <property type="entry name" value="Dihydroorotase_CS"/>
</dbReference>
<dbReference type="InterPro" id="IPR032466">
    <property type="entry name" value="Metal_Hydrolase"/>
</dbReference>
<dbReference type="NCBIfam" id="TIGR00856">
    <property type="entry name" value="pyrC_dimer"/>
    <property type="match status" value="1"/>
</dbReference>
<dbReference type="PANTHER" id="PTHR43137">
    <property type="entry name" value="DIHYDROOROTASE"/>
    <property type="match status" value="1"/>
</dbReference>
<dbReference type="PANTHER" id="PTHR43137:SF1">
    <property type="entry name" value="DIHYDROOROTASE"/>
    <property type="match status" value="1"/>
</dbReference>
<dbReference type="Pfam" id="PF01979">
    <property type="entry name" value="Amidohydro_1"/>
    <property type="match status" value="1"/>
</dbReference>
<dbReference type="PIRSF" id="PIRSF001237">
    <property type="entry name" value="DHOdimr"/>
    <property type="match status" value="1"/>
</dbReference>
<dbReference type="SUPFAM" id="SSF51556">
    <property type="entry name" value="Metallo-dependent hydrolases"/>
    <property type="match status" value="1"/>
</dbReference>
<dbReference type="PROSITE" id="PS00482">
    <property type="entry name" value="DIHYDROOROTASE_1"/>
    <property type="match status" value="1"/>
</dbReference>
<dbReference type="PROSITE" id="PS00483">
    <property type="entry name" value="DIHYDROOROTASE_2"/>
    <property type="match status" value="1"/>
</dbReference>
<feature type="transit peptide" description="Mitochondrion" evidence="2">
    <location>
        <begin position="1"/>
        <end status="unknown"/>
    </location>
</feature>
<feature type="chain" id="PRO_0000029883" description="Dihydroorotase, mitochondrial">
    <location>
        <begin status="unknown"/>
        <end position="377"/>
    </location>
</feature>
<feature type="binding site" evidence="1">
    <location>
        <position position="44"/>
    </location>
    <ligand>
        <name>Zn(2+)</name>
        <dbReference type="ChEBI" id="CHEBI:29105"/>
        <label>1</label>
    </ligand>
</feature>
<feature type="binding site" evidence="1">
    <location>
        <position position="46"/>
    </location>
    <ligand>
        <name>Zn(2+)</name>
        <dbReference type="ChEBI" id="CHEBI:29105"/>
        <label>1</label>
    </ligand>
</feature>
<feature type="binding site" description="via carbamate group" evidence="1">
    <location>
        <position position="130"/>
    </location>
    <ligand>
        <name>Zn(2+)</name>
        <dbReference type="ChEBI" id="CHEBI:29105"/>
        <label>1</label>
    </ligand>
</feature>
<feature type="binding site" description="via carbamate group" evidence="1">
    <location>
        <position position="130"/>
    </location>
    <ligand>
        <name>Zn(2+)</name>
        <dbReference type="ChEBI" id="CHEBI:29105"/>
        <label>2</label>
    </ligand>
</feature>
<feature type="binding site" evidence="1">
    <location>
        <position position="168"/>
    </location>
    <ligand>
        <name>Zn(2+)</name>
        <dbReference type="ChEBI" id="CHEBI:29105"/>
        <label>2</label>
    </ligand>
</feature>
<feature type="binding site" evidence="1">
    <location>
        <position position="206"/>
    </location>
    <ligand>
        <name>Zn(2+)</name>
        <dbReference type="ChEBI" id="CHEBI:29105"/>
        <label>2</label>
    </ligand>
</feature>
<feature type="binding site" evidence="1">
    <location>
        <position position="280"/>
    </location>
    <ligand>
        <name>Zn(2+)</name>
        <dbReference type="ChEBI" id="CHEBI:29105"/>
        <label>1</label>
    </ligand>
</feature>
<feature type="modified residue" description="N6-carboxylysine" evidence="1">
    <location>
        <position position="130"/>
    </location>
</feature>
<feature type="modified residue" description="Phosphoserine" evidence="4">
    <location>
        <position position="223"/>
    </location>
</feature>
<feature type="sequence conflict" description="In Ref. 4; BAF00239." evidence="3" ref="4">
    <original>F</original>
    <variation>L</variation>
    <location>
        <position position="179"/>
    </location>
</feature>
<reference key="1">
    <citation type="online journal article" date="1997" name="Plant Gene Register">
        <title>Characterization of the Arabidopsis thaliana cDNA encoding dihydroorotase.</title>
        <authorList>
            <person name="Zhou L."/>
            <person name="Lacroute F."/>
            <person name="Thornburg R.W."/>
        </authorList>
        <locator>PGR97-115</locator>
    </citation>
    <scope>NUCLEOTIDE SEQUENCE [MRNA]</scope>
    <source>
        <strain>cv. Columbia</strain>
    </source>
</reference>
<reference key="2">
    <citation type="journal article" date="1999" name="Nature">
        <title>Sequence and analysis of chromosome 4 of the plant Arabidopsis thaliana.</title>
        <authorList>
            <person name="Mayer K.F.X."/>
            <person name="Schueller C."/>
            <person name="Wambutt R."/>
            <person name="Murphy G."/>
            <person name="Volckaert G."/>
            <person name="Pohl T."/>
            <person name="Duesterhoeft A."/>
            <person name="Stiekema W."/>
            <person name="Entian K.-D."/>
            <person name="Terryn N."/>
            <person name="Harris B."/>
            <person name="Ansorge W."/>
            <person name="Brandt P."/>
            <person name="Grivell L.A."/>
            <person name="Rieger M."/>
            <person name="Weichselgartner M."/>
            <person name="de Simone V."/>
            <person name="Obermaier B."/>
            <person name="Mache R."/>
            <person name="Mueller M."/>
            <person name="Kreis M."/>
            <person name="Delseny M."/>
            <person name="Puigdomenech P."/>
            <person name="Watson M."/>
            <person name="Schmidtheini T."/>
            <person name="Reichert B."/>
            <person name="Portetelle D."/>
            <person name="Perez-Alonso M."/>
            <person name="Boutry M."/>
            <person name="Bancroft I."/>
            <person name="Vos P."/>
            <person name="Hoheisel J."/>
            <person name="Zimmermann W."/>
            <person name="Wedler H."/>
            <person name="Ridley P."/>
            <person name="Langham S.-A."/>
            <person name="McCullagh B."/>
            <person name="Bilham L."/>
            <person name="Robben J."/>
            <person name="van der Schueren J."/>
            <person name="Grymonprez B."/>
            <person name="Chuang Y.-J."/>
            <person name="Vandenbussche F."/>
            <person name="Braeken M."/>
            <person name="Weltjens I."/>
            <person name="Voet M."/>
            <person name="Bastiaens I."/>
            <person name="Aert R."/>
            <person name="Defoor E."/>
            <person name="Weitzenegger T."/>
            <person name="Bothe G."/>
            <person name="Ramsperger U."/>
            <person name="Hilbert H."/>
            <person name="Braun M."/>
            <person name="Holzer E."/>
            <person name="Brandt A."/>
            <person name="Peters S."/>
            <person name="van Staveren M."/>
            <person name="Dirkse W."/>
            <person name="Mooijman P."/>
            <person name="Klein Lankhorst R."/>
            <person name="Rose M."/>
            <person name="Hauf J."/>
            <person name="Koetter P."/>
            <person name="Berneiser S."/>
            <person name="Hempel S."/>
            <person name="Feldpausch M."/>
            <person name="Lamberth S."/>
            <person name="Van den Daele H."/>
            <person name="De Keyser A."/>
            <person name="Buysshaert C."/>
            <person name="Gielen J."/>
            <person name="Villarroel R."/>
            <person name="De Clercq R."/>
            <person name="van Montagu M."/>
            <person name="Rogers J."/>
            <person name="Cronin A."/>
            <person name="Quail M.A."/>
            <person name="Bray-Allen S."/>
            <person name="Clark L."/>
            <person name="Doggett J."/>
            <person name="Hall S."/>
            <person name="Kay M."/>
            <person name="Lennard N."/>
            <person name="McLay K."/>
            <person name="Mayes R."/>
            <person name="Pettett A."/>
            <person name="Rajandream M.A."/>
            <person name="Lyne M."/>
            <person name="Benes V."/>
            <person name="Rechmann S."/>
            <person name="Borkova D."/>
            <person name="Bloecker H."/>
            <person name="Scharfe M."/>
            <person name="Grimm M."/>
            <person name="Loehnert T.-H."/>
            <person name="Dose S."/>
            <person name="de Haan M."/>
            <person name="Maarse A.C."/>
            <person name="Schaefer M."/>
            <person name="Mueller-Auer S."/>
            <person name="Gabel C."/>
            <person name="Fuchs M."/>
            <person name="Fartmann B."/>
            <person name="Granderath K."/>
            <person name="Dauner D."/>
            <person name="Herzl A."/>
            <person name="Neumann S."/>
            <person name="Argiriou A."/>
            <person name="Vitale D."/>
            <person name="Liguori R."/>
            <person name="Piravandi E."/>
            <person name="Massenet O."/>
            <person name="Quigley F."/>
            <person name="Clabauld G."/>
            <person name="Muendlein A."/>
            <person name="Felber R."/>
            <person name="Schnabl S."/>
            <person name="Hiller R."/>
            <person name="Schmidt W."/>
            <person name="Lecharny A."/>
            <person name="Aubourg S."/>
            <person name="Chefdor F."/>
            <person name="Cooke R."/>
            <person name="Berger C."/>
            <person name="Monfort A."/>
            <person name="Casacuberta E."/>
            <person name="Gibbons T."/>
            <person name="Weber N."/>
            <person name="Vandenbol M."/>
            <person name="Bargues M."/>
            <person name="Terol J."/>
            <person name="Torres A."/>
            <person name="Perez-Perez A."/>
            <person name="Purnelle B."/>
            <person name="Bent E."/>
            <person name="Johnson S."/>
            <person name="Tacon D."/>
            <person name="Jesse T."/>
            <person name="Heijnen L."/>
            <person name="Schwarz S."/>
            <person name="Scholler P."/>
            <person name="Heber S."/>
            <person name="Francs P."/>
            <person name="Bielke C."/>
            <person name="Frishman D."/>
            <person name="Haase D."/>
            <person name="Lemcke K."/>
            <person name="Mewes H.-W."/>
            <person name="Stocker S."/>
            <person name="Zaccaria P."/>
            <person name="Bevan M."/>
            <person name="Wilson R.K."/>
            <person name="de la Bastide M."/>
            <person name="Habermann K."/>
            <person name="Parnell L."/>
            <person name="Dedhia N."/>
            <person name="Gnoj L."/>
            <person name="Schutz K."/>
            <person name="Huang E."/>
            <person name="Spiegel L."/>
            <person name="Sekhon M."/>
            <person name="Murray J."/>
            <person name="Sheet P."/>
            <person name="Cordes M."/>
            <person name="Abu-Threideh J."/>
            <person name="Stoneking T."/>
            <person name="Kalicki J."/>
            <person name="Graves T."/>
            <person name="Harmon G."/>
            <person name="Edwards J."/>
            <person name="Latreille P."/>
            <person name="Courtney L."/>
            <person name="Cloud J."/>
            <person name="Abbott A."/>
            <person name="Scott K."/>
            <person name="Johnson D."/>
            <person name="Minx P."/>
            <person name="Bentley D."/>
            <person name="Fulton B."/>
            <person name="Miller N."/>
            <person name="Greco T."/>
            <person name="Kemp K."/>
            <person name="Kramer J."/>
            <person name="Fulton L."/>
            <person name="Mardis E."/>
            <person name="Dante M."/>
            <person name="Pepin K."/>
            <person name="Hillier L.W."/>
            <person name="Nelson J."/>
            <person name="Spieth J."/>
            <person name="Ryan E."/>
            <person name="Andrews S."/>
            <person name="Geisel C."/>
            <person name="Layman D."/>
            <person name="Du H."/>
            <person name="Ali J."/>
            <person name="Berghoff A."/>
            <person name="Jones K."/>
            <person name="Drone K."/>
            <person name="Cotton M."/>
            <person name="Joshu C."/>
            <person name="Antonoiu B."/>
            <person name="Zidanic M."/>
            <person name="Strong C."/>
            <person name="Sun H."/>
            <person name="Lamar B."/>
            <person name="Yordan C."/>
            <person name="Ma P."/>
            <person name="Zhong J."/>
            <person name="Preston R."/>
            <person name="Vil D."/>
            <person name="Shekher M."/>
            <person name="Matero A."/>
            <person name="Shah R."/>
            <person name="Swaby I.K."/>
            <person name="O'Shaughnessy A."/>
            <person name="Rodriguez M."/>
            <person name="Hoffman J."/>
            <person name="Till S."/>
            <person name="Granat S."/>
            <person name="Shohdy N."/>
            <person name="Hasegawa A."/>
            <person name="Hameed A."/>
            <person name="Lodhi M."/>
            <person name="Johnson A."/>
            <person name="Chen E."/>
            <person name="Marra M.A."/>
            <person name="Martienssen R."/>
            <person name="McCombie W.R."/>
        </authorList>
    </citation>
    <scope>NUCLEOTIDE SEQUENCE [LARGE SCALE GENOMIC DNA]</scope>
    <source>
        <strain>cv. Columbia</strain>
    </source>
</reference>
<reference key="3">
    <citation type="journal article" date="2017" name="Plant J.">
        <title>Araport11: a complete reannotation of the Arabidopsis thaliana reference genome.</title>
        <authorList>
            <person name="Cheng C.Y."/>
            <person name="Krishnakumar V."/>
            <person name="Chan A.P."/>
            <person name="Thibaud-Nissen F."/>
            <person name="Schobel S."/>
            <person name="Town C.D."/>
        </authorList>
    </citation>
    <scope>GENOME REANNOTATION</scope>
    <source>
        <strain>cv. Columbia</strain>
    </source>
</reference>
<reference key="4">
    <citation type="submission" date="2006-07" db="EMBL/GenBank/DDBJ databases">
        <title>Large-scale analysis of RIKEN Arabidopsis full-length (RAFL) cDNAs.</title>
        <authorList>
            <person name="Totoki Y."/>
            <person name="Seki M."/>
            <person name="Ishida J."/>
            <person name="Nakajima M."/>
            <person name="Enju A."/>
            <person name="Kamiya A."/>
            <person name="Narusaka M."/>
            <person name="Shin-i T."/>
            <person name="Nakagawa M."/>
            <person name="Sakamoto N."/>
            <person name="Oishi K."/>
            <person name="Kohara Y."/>
            <person name="Kobayashi M."/>
            <person name="Toyoda A."/>
            <person name="Sakaki Y."/>
            <person name="Sakurai T."/>
            <person name="Iida K."/>
            <person name="Akiyama K."/>
            <person name="Satou M."/>
            <person name="Toyoda T."/>
            <person name="Konagaya A."/>
            <person name="Carninci P."/>
            <person name="Kawai J."/>
            <person name="Hayashizaki Y."/>
            <person name="Shinozaki K."/>
        </authorList>
    </citation>
    <scope>NUCLEOTIDE SEQUENCE [LARGE SCALE MRNA] OF 12-377</scope>
    <source>
        <strain>cv. Columbia</strain>
    </source>
</reference>
<reference key="5">
    <citation type="journal article" date="2012" name="J. Proteome Res.">
        <title>Identification of phosphoproteins in Arabidopsis thaliana leaves using polyethylene glycol fractionation, immobilized metal-ion affinity chromatography, two-dimensional gel electrophoresis and mass spectrometry.</title>
        <authorList>
            <person name="Aryal U.K."/>
            <person name="Krochko J.E."/>
            <person name="Ross A.R."/>
        </authorList>
    </citation>
    <scope>PHOSPHORYLATION [LARGE SCALE ANALYSIS] AT SER-223</scope>
    <scope>IDENTIFICATION BY MASS SPECTROMETRY [LARGE SCALE ANALYSIS]</scope>
</reference>
<protein>
    <recommendedName>
        <fullName>Dihydroorotase, mitochondrial</fullName>
        <shortName>DHOase</shortName>
        <ecNumber>3.5.2.3</ecNumber>
    </recommendedName>
</protein>
<evidence type="ECO:0000250" key="1">
    <source>
        <dbReference type="UniProtKB" id="P05020"/>
    </source>
</evidence>
<evidence type="ECO:0000255" key="2"/>
<evidence type="ECO:0000305" key="3"/>
<evidence type="ECO:0007744" key="4">
    <source>
    </source>
</evidence>
<organism>
    <name type="scientific">Arabidopsis thaliana</name>
    <name type="common">Mouse-ear cress</name>
    <dbReference type="NCBI Taxonomy" id="3702"/>
    <lineage>
        <taxon>Eukaryota</taxon>
        <taxon>Viridiplantae</taxon>
        <taxon>Streptophyta</taxon>
        <taxon>Embryophyta</taxon>
        <taxon>Tracheophyta</taxon>
        <taxon>Spermatophyta</taxon>
        <taxon>Magnoliopsida</taxon>
        <taxon>eudicotyledons</taxon>
        <taxon>Gunneridae</taxon>
        <taxon>Pentapetalae</taxon>
        <taxon>rosids</taxon>
        <taxon>malvids</taxon>
        <taxon>Brassicales</taxon>
        <taxon>Brassicaceae</taxon>
        <taxon>Camelineae</taxon>
        <taxon>Arabidopsis</taxon>
    </lineage>
</organism>
<name>PYRC_ARATH</name>
<accession>O04904</accession>
<accession>Q0WRL0</accession>
<sequence length="377" mass="41950">MIKTLVSPYSGFGSQKLKFDRSSEKVKTRAVRMELTITQPDDWHLHLRDGDLLHAVVPHSASNFKRAIVMPNLKPPVTSTAAAIIYRKFIMKALPSESSFDPLMTLYLTDKTLPEEIRLARESGVVYAVKLYPAGATTNSQDGVTDLFGKCLPVLEEMVKQNMPLLVHGEVTDPSIDVFDREKIFIETVLQPLIQRLPQLKVVMEHITTMDAVNFVESCKEGSVGATVTPQHLLLNRNALFQGGLQPHNYCLPVLKREIHREAIVKAVTSGSKKFFLGTDSAPHERSRKESSCGCAGIYSAPIALSLYAKVFDEAGALDKLEAFTSFNGPDFYGLPRNSSKITLKKSPWKVPDVFNFPFGEIVPMFAGETLQWQPLK</sequence>